<dbReference type="EC" id="2.7.7.6" evidence="1"/>
<dbReference type="EMBL" id="AE008922">
    <property type="protein sequence ID" value="AAM42518.1"/>
    <property type="molecule type" value="Genomic_DNA"/>
</dbReference>
<dbReference type="RefSeq" id="NP_638594.1">
    <property type="nucleotide sequence ID" value="NC_003902.1"/>
</dbReference>
<dbReference type="RefSeq" id="WP_002812428.1">
    <property type="nucleotide sequence ID" value="NC_003902.1"/>
</dbReference>
<dbReference type="SMR" id="P66733"/>
<dbReference type="STRING" id="190485.XCC3248"/>
<dbReference type="EnsemblBacteria" id="AAM42518">
    <property type="protein sequence ID" value="AAM42518"/>
    <property type="gene ID" value="XCC3248"/>
</dbReference>
<dbReference type="GeneID" id="97511588"/>
<dbReference type="KEGG" id="xcc:XCC3248"/>
<dbReference type="PATRIC" id="fig|190485.4.peg.3471"/>
<dbReference type="eggNOG" id="COG1758">
    <property type="taxonomic scope" value="Bacteria"/>
</dbReference>
<dbReference type="HOGENOM" id="CLU_125406_5_3_6"/>
<dbReference type="OrthoDB" id="9796300at2"/>
<dbReference type="PRO" id="PR:P66733"/>
<dbReference type="Proteomes" id="UP000001010">
    <property type="component" value="Chromosome"/>
</dbReference>
<dbReference type="GO" id="GO:0000345">
    <property type="term" value="C:cytosolic DNA-directed RNA polymerase complex"/>
    <property type="evidence" value="ECO:0000318"/>
    <property type="project" value="GO_Central"/>
</dbReference>
<dbReference type="GO" id="GO:0001000">
    <property type="term" value="F:bacterial-type RNA polymerase core enzyme binding"/>
    <property type="evidence" value="ECO:0000318"/>
    <property type="project" value="GO_Central"/>
</dbReference>
<dbReference type="GO" id="GO:0003677">
    <property type="term" value="F:DNA binding"/>
    <property type="evidence" value="ECO:0007669"/>
    <property type="project" value="UniProtKB-UniRule"/>
</dbReference>
<dbReference type="GO" id="GO:0003899">
    <property type="term" value="F:DNA-directed RNA polymerase activity"/>
    <property type="evidence" value="ECO:0007669"/>
    <property type="project" value="UniProtKB-UniRule"/>
</dbReference>
<dbReference type="GO" id="GO:0006352">
    <property type="term" value="P:DNA-templated transcription initiation"/>
    <property type="evidence" value="ECO:0000318"/>
    <property type="project" value="GO_Central"/>
</dbReference>
<dbReference type="Gene3D" id="3.90.940.10">
    <property type="match status" value="1"/>
</dbReference>
<dbReference type="HAMAP" id="MF_00366">
    <property type="entry name" value="RNApol_bact_RpoZ"/>
    <property type="match status" value="1"/>
</dbReference>
<dbReference type="InterPro" id="IPR003716">
    <property type="entry name" value="DNA-dir_RNA_pol_omega"/>
</dbReference>
<dbReference type="InterPro" id="IPR006110">
    <property type="entry name" value="Pol_omega/Rpo6/RPB6"/>
</dbReference>
<dbReference type="InterPro" id="IPR036161">
    <property type="entry name" value="RPB6/omega-like_sf"/>
</dbReference>
<dbReference type="NCBIfam" id="TIGR00690">
    <property type="entry name" value="rpoZ"/>
    <property type="match status" value="1"/>
</dbReference>
<dbReference type="PANTHER" id="PTHR34476">
    <property type="entry name" value="DNA-DIRECTED RNA POLYMERASE SUBUNIT OMEGA"/>
    <property type="match status" value="1"/>
</dbReference>
<dbReference type="PANTHER" id="PTHR34476:SF1">
    <property type="entry name" value="DNA-DIRECTED RNA POLYMERASE SUBUNIT OMEGA"/>
    <property type="match status" value="1"/>
</dbReference>
<dbReference type="Pfam" id="PF01192">
    <property type="entry name" value="RNA_pol_Rpb6"/>
    <property type="match status" value="1"/>
</dbReference>
<dbReference type="SMART" id="SM01409">
    <property type="entry name" value="RNA_pol_Rpb6"/>
    <property type="match status" value="1"/>
</dbReference>
<dbReference type="SUPFAM" id="SSF63562">
    <property type="entry name" value="RPB6/omega subunit-like"/>
    <property type="match status" value="1"/>
</dbReference>
<organism>
    <name type="scientific">Xanthomonas campestris pv. campestris (strain ATCC 33913 / DSM 3586 / NCPPB 528 / LMG 568 / P 25)</name>
    <dbReference type="NCBI Taxonomy" id="190485"/>
    <lineage>
        <taxon>Bacteria</taxon>
        <taxon>Pseudomonadati</taxon>
        <taxon>Pseudomonadota</taxon>
        <taxon>Gammaproteobacteria</taxon>
        <taxon>Lysobacterales</taxon>
        <taxon>Lysobacteraceae</taxon>
        <taxon>Xanthomonas</taxon>
    </lineage>
</organism>
<proteinExistence type="inferred from homology"/>
<accession>P66733</accession>
<accession>Q8NL41</accession>
<sequence length="99" mass="11143">MARITVEDCLEVVNNRFELVMMASKRARQLANGVQPLIENADASDKPTVMALREIAARRIDNALIDEVEKAERERAEREALEWAAAEVVADEDMSKNDD</sequence>
<reference key="1">
    <citation type="journal article" date="2002" name="Nature">
        <title>Comparison of the genomes of two Xanthomonas pathogens with differing host specificities.</title>
        <authorList>
            <person name="da Silva A.C.R."/>
            <person name="Ferro J.A."/>
            <person name="Reinach F.C."/>
            <person name="Farah C.S."/>
            <person name="Furlan L.R."/>
            <person name="Quaggio R.B."/>
            <person name="Monteiro-Vitorello C.B."/>
            <person name="Van Sluys M.A."/>
            <person name="Almeida N.F. Jr."/>
            <person name="Alves L.M.C."/>
            <person name="do Amaral A.M."/>
            <person name="Bertolini M.C."/>
            <person name="Camargo L.E.A."/>
            <person name="Camarotte G."/>
            <person name="Cannavan F."/>
            <person name="Cardozo J."/>
            <person name="Chambergo F."/>
            <person name="Ciapina L.P."/>
            <person name="Cicarelli R.M.B."/>
            <person name="Coutinho L.L."/>
            <person name="Cursino-Santos J.R."/>
            <person name="El-Dorry H."/>
            <person name="Faria J.B."/>
            <person name="Ferreira A.J.S."/>
            <person name="Ferreira R.C.C."/>
            <person name="Ferro M.I.T."/>
            <person name="Formighieri E.F."/>
            <person name="Franco M.C."/>
            <person name="Greggio C.C."/>
            <person name="Gruber A."/>
            <person name="Katsuyama A.M."/>
            <person name="Kishi L.T."/>
            <person name="Leite R.P."/>
            <person name="Lemos E.G.M."/>
            <person name="Lemos M.V.F."/>
            <person name="Locali E.C."/>
            <person name="Machado M.A."/>
            <person name="Madeira A.M.B.N."/>
            <person name="Martinez-Rossi N.M."/>
            <person name="Martins E.C."/>
            <person name="Meidanis J."/>
            <person name="Menck C.F.M."/>
            <person name="Miyaki C.Y."/>
            <person name="Moon D.H."/>
            <person name="Moreira L.M."/>
            <person name="Novo M.T.M."/>
            <person name="Okura V.K."/>
            <person name="Oliveira M.C."/>
            <person name="Oliveira V.R."/>
            <person name="Pereira H.A."/>
            <person name="Rossi A."/>
            <person name="Sena J.A.D."/>
            <person name="Silva C."/>
            <person name="de Souza R.F."/>
            <person name="Spinola L.A.F."/>
            <person name="Takita M.A."/>
            <person name="Tamura R.E."/>
            <person name="Teixeira E.C."/>
            <person name="Tezza R.I.D."/>
            <person name="Trindade dos Santos M."/>
            <person name="Truffi D."/>
            <person name="Tsai S.M."/>
            <person name="White F.F."/>
            <person name="Setubal J.C."/>
            <person name="Kitajima J.P."/>
        </authorList>
    </citation>
    <scope>NUCLEOTIDE SEQUENCE [LARGE SCALE GENOMIC DNA]</scope>
    <source>
        <strain>ATCC 33913 / DSM 3586 / NCPPB 528 / LMG 568 / P 25</strain>
    </source>
</reference>
<name>RPOZ_XANCP</name>
<keyword id="KW-0240">DNA-directed RNA polymerase</keyword>
<keyword id="KW-0548">Nucleotidyltransferase</keyword>
<keyword id="KW-1185">Reference proteome</keyword>
<keyword id="KW-0804">Transcription</keyword>
<keyword id="KW-0808">Transferase</keyword>
<gene>
    <name evidence="1" type="primary">rpoZ</name>
    <name type="ordered locus">XCC3248</name>
</gene>
<evidence type="ECO:0000255" key="1">
    <source>
        <dbReference type="HAMAP-Rule" id="MF_00366"/>
    </source>
</evidence>
<feature type="chain" id="PRO_0000129016" description="DNA-directed RNA polymerase subunit omega">
    <location>
        <begin position="1"/>
        <end position="99"/>
    </location>
</feature>
<protein>
    <recommendedName>
        <fullName evidence="1">DNA-directed RNA polymerase subunit omega</fullName>
        <shortName evidence="1">RNAP omega subunit</shortName>
        <ecNumber evidence="1">2.7.7.6</ecNumber>
    </recommendedName>
    <alternativeName>
        <fullName evidence="1">RNA polymerase omega subunit</fullName>
    </alternativeName>
    <alternativeName>
        <fullName evidence="1">Transcriptase subunit omega</fullName>
    </alternativeName>
</protein>
<comment type="function">
    <text evidence="1">Promotes RNA polymerase assembly. Latches the N- and C-terminal regions of the beta' subunit thereby facilitating its interaction with the beta and alpha subunits.</text>
</comment>
<comment type="catalytic activity">
    <reaction evidence="1">
        <text>RNA(n) + a ribonucleoside 5'-triphosphate = RNA(n+1) + diphosphate</text>
        <dbReference type="Rhea" id="RHEA:21248"/>
        <dbReference type="Rhea" id="RHEA-COMP:14527"/>
        <dbReference type="Rhea" id="RHEA-COMP:17342"/>
        <dbReference type="ChEBI" id="CHEBI:33019"/>
        <dbReference type="ChEBI" id="CHEBI:61557"/>
        <dbReference type="ChEBI" id="CHEBI:140395"/>
        <dbReference type="EC" id="2.7.7.6"/>
    </reaction>
</comment>
<comment type="subunit">
    <text evidence="1">The RNAP catalytic core consists of 2 alpha, 1 beta, 1 beta' and 1 omega subunit. When a sigma factor is associated with the core the holoenzyme is formed, which can initiate transcription.</text>
</comment>
<comment type="similarity">
    <text evidence="1">Belongs to the RNA polymerase subunit omega family.</text>
</comment>